<sequence>MSNYFDKIEKVKYEGADSTNPFAFKHYNPNEVILGKTMAEHLRLAVCYWHTFCWTGNDMFGVGSLDRSWQKTGDLLEGAKQKAEIAFEFFQKLGIPYYCFHDVDIAPEGNSYKEYVHNFHTMVDILEKKQAETGVKLLWGTANCFTNPRYMSGASTNPNPEVFSWAASQVFNAMNATKRLGGENYVLWGGREGYETLLNTDLKREREQIGRFMQMVVEHKHKIGFNGTLLIEPKPQEPTKHQYDYDVATVYGFLKQFGLEKEIKVNIEANHATLAGHTFQHEIATAAALDIFGSIDANRGDPQLGWDTDQFPNSVEENTLVMYEILKAGGFTTGGFNFDAKIRRQSTDPYDLFHGHIGAIDVLALSLKRAAKMIEDKTLQGIVDQRYAGWNGDLGQQILAGKASLEDLAKIVESKALDPKPVSGQQEYLENLVNNYIYR</sequence>
<name>XYLA_ACTPJ</name>
<organism>
    <name type="scientific">Actinobacillus pleuropneumoniae serotype 3 (strain JL03)</name>
    <dbReference type="NCBI Taxonomy" id="434271"/>
    <lineage>
        <taxon>Bacteria</taxon>
        <taxon>Pseudomonadati</taxon>
        <taxon>Pseudomonadota</taxon>
        <taxon>Gammaproteobacteria</taxon>
        <taxon>Pasteurellales</taxon>
        <taxon>Pasteurellaceae</taxon>
        <taxon>Actinobacillus</taxon>
    </lineage>
</organism>
<evidence type="ECO:0000255" key="1">
    <source>
        <dbReference type="HAMAP-Rule" id="MF_00455"/>
    </source>
</evidence>
<keyword id="KW-0119">Carbohydrate metabolism</keyword>
<keyword id="KW-0963">Cytoplasm</keyword>
<keyword id="KW-0413">Isomerase</keyword>
<keyword id="KW-0460">Magnesium</keyword>
<keyword id="KW-0479">Metal-binding</keyword>
<keyword id="KW-0859">Xylose metabolism</keyword>
<feature type="chain" id="PRO_1000200272" description="Xylose isomerase">
    <location>
        <begin position="1"/>
        <end position="439"/>
    </location>
</feature>
<feature type="active site" evidence="1">
    <location>
        <position position="101"/>
    </location>
</feature>
<feature type="active site" evidence="1">
    <location>
        <position position="104"/>
    </location>
</feature>
<feature type="binding site" evidence="1">
    <location>
        <position position="232"/>
    </location>
    <ligand>
        <name>Mg(2+)</name>
        <dbReference type="ChEBI" id="CHEBI:18420"/>
        <label>1</label>
    </ligand>
</feature>
<feature type="binding site" evidence="1">
    <location>
        <position position="268"/>
    </location>
    <ligand>
        <name>Mg(2+)</name>
        <dbReference type="ChEBI" id="CHEBI:18420"/>
        <label>1</label>
    </ligand>
</feature>
<feature type="binding site" evidence="1">
    <location>
        <position position="268"/>
    </location>
    <ligand>
        <name>Mg(2+)</name>
        <dbReference type="ChEBI" id="CHEBI:18420"/>
        <label>2</label>
    </ligand>
</feature>
<feature type="binding site" evidence="1">
    <location>
        <position position="271"/>
    </location>
    <ligand>
        <name>Mg(2+)</name>
        <dbReference type="ChEBI" id="CHEBI:18420"/>
        <label>2</label>
    </ligand>
</feature>
<feature type="binding site" evidence="1">
    <location>
        <position position="296"/>
    </location>
    <ligand>
        <name>Mg(2+)</name>
        <dbReference type="ChEBI" id="CHEBI:18420"/>
        <label>1</label>
    </ligand>
</feature>
<feature type="binding site" evidence="1">
    <location>
        <position position="307"/>
    </location>
    <ligand>
        <name>Mg(2+)</name>
        <dbReference type="ChEBI" id="CHEBI:18420"/>
        <label>2</label>
    </ligand>
</feature>
<feature type="binding site" evidence="1">
    <location>
        <position position="309"/>
    </location>
    <ligand>
        <name>Mg(2+)</name>
        <dbReference type="ChEBI" id="CHEBI:18420"/>
        <label>2</label>
    </ligand>
</feature>
<feature type="binding site" evidence="1">
    <location>
        <position position="339"/>
    </location>
    <ligand>
        <name>Mg(2+)</name>
        <dbReference type="ChEBI" id="CHEBI:18420"/>
        <label>1</label>
    </ligand>
</feature>
<protein>
    <recommendedName>
        <fullName evidence="1">Xylose isomerase</fullName>
        <ecNumber evidence="1">5.3.1.5</ecNumber>
    </recommendedName>
</protein>
<comment type="catalytic activity">
    <reaction evidence="1">
        <text>alpha-D-xylose = alpha-D-xylulofuranose</text>
        <dbReference type="Rhea" id="RHEA:22816"/>
        <dbReference type="ChEBI" id="CHEBI:28518"/>
        <dbReference type="ChEBI" id="CHEBI:188998"/>
        <dbReference type="EC" id="5.3.1.5"/>
    </reaction>
</comment>
<comment type="cofactor">
    <cofactor evidence="1">
        <name>Mg(2+)</name>
        <dbReference type="ChEBI" id="CHEBI:18420"/>
    </cofactor>
    <text evidence="1">Binds 2 magnesium ions per subunit.</text>
</comment>
<comment type="subunit">
    <text evidence="1">Homotetramer.</text>
</comment>
<comment type="subcellular location">
    <subcellularLocation>
        <location evidence="1">Cytoplasm</location>
    </subcellularLocation>
</comment>
<comment type="similarity">
    <text evidence="1">Belongs to the xylose isomerase family.</text>
</comment>
<proteinExistence type="inferred from homology"/>
<reference key="1">
    <citation type="journal article" date="2008" name="PLoS ONE">
        <title>Genome biology of Actinobacillus pleuropneumoniae JL03, an isolate of serotype 3 prevalent in China.</title>
        <authorList>
            <person name="Xu Z."/>
            <person name="Zhou Y."/>
            <person name="Li L."/>
            <person name="Zhou R."/>
            <person name="Xiao S."/>
            <person name="Wan Y."/>
            <person name="Zhang S."/>
            <person name="Wang K."/>
            <person name="Li W."/>
            <person name="Li L."/>
            <person name="Jin H."/>
            <person name="Kang M."/>
            <person name="Dalai B."/>
            <person name="Li T."/>
            <person name="Liu L."/>
            <person name="Cheng Y."/>
            <person name="Zhang L."/>
            <person name="Xu T."/>
            <person name="Zheng H."/>
            <person name="Pu S."/>
            <person name="Wang B."/>
            <person name="Gu W."/>
            <person name="Zhang X.L."/>
            <person name="Zhu G.-F."/>
            <person name="Wang S."/>
            <person name="Zhao G.-P."/>
            <person name="Chen H."/>
        </authorList>
    </citation>
    <scope>NUCLEOTIDE SEQUENCE [LARGE SCALE GENOMIC DNA]</scope>
    <source>
        <strain>JL03</strain>
    </source>
</reference>
<dbReference type="EC" id="5.3.1.5" evidence="1"/>
<dbReference type="EMBL" id="CP000687">
    <property type="protein sequence ID" value="ABY70503.1"/>
    <property type="molecule type" value="Genomic_DNA"/>
</dbReference>
<dbReference type="RefSeq" id="WP_005599638.1">
    <property type="nucleotide sequence ID" value="NC_010278.1"/>
</dbReference>
<dbReference type="SMR" id="B0BTI9"/>
<dbReference type="GeneID" id="48600213"/>
<dbReference type="KEGG" id="apj:APJL_1955"/>
<dbReference type="HOGENOM" id="CLU_037261_1_0_6"/>
<dbReference type="Proteomes" id="UP000008547">
    <property type="component" value="Chromosome"/>
</dbReference>
<dbReference type="GO" id="GO:0005737">
    <property type="term" value="C:cytoplasm"/>
    <property type="evidence" value="ECO:0007669"/>
    <property type="project" value="UniProtKB-SubCell"/>
</dbReference>
<dbReference type="GO" id="GO:0000287">
    <property type="term" value="F:magnesium ion binding"/>
    <property type="evidence" value="ECO:0007669"/>
    <property type="project" value="UniProtKB-UniRule"/>
</dbReference>
<dbReference type="GO" id="GO:0009045">
    <property type="term" value="F:xylose isomerase activity"/>
    <property type="evidence" value="ECO:0007669"/>
    <property type="project" value="UniProtKB-UniRule"/>
</dbReference>
<dbReference type="GO" id="GO:0042732">
    <property type="term" value="P:D-xylose metabolic process"/>
    <property type="evidence" value="ECO:0007669"/>
    <property type="project" value="UniProtKB-UniRule"/>
</dbReference>
<dbReference type="FunFam" id="3.20.20.150:FF:000002">
    <property type="entry name" value="Xylose isomerase"/>
    <property type="match status" value="1"/>
</dbReference>
<dbReference type="Gene3D" id="3.20.20.150">
    <property type="entry name" value="Divalent-metal-dependent TIM barrel enzymes"/>
    <property type="match status" value="1"/>
</dbReference>
<dbReference type="HAMAP" id="MF_00455">
    <property type="entry name" value="Xylose_isom_A"/>
    <property type="match status" value="1"/>
</dbReference>
<dbReference type="InterPro" id="IPR036237">
    <property type="entry name" value="Xyl_isomerase-like_sf"/>
</dbReference>
<dbReference type="InterPro" id="IPR013452">
    <property type="entry name" value="Xylose_isom_bac"/>
</dbReference>
<dbReference type="InterPro" id="IPR001998">
    <property type="entry name" value="Xylose_isomerase"/>
</dbReference>
<dbReference type="NCBIfam" id="NF003998">
    <property type="entry name" value="PRK05474.1"/>
    <property type="match status" value="1"/>
</dbReference>
<dbReference type="NCBIfam" id="TIGR02630">
    <property type="entry name" value="xylose_isom_A"/>
    <property type="match status" value="1"/>
</dbReference>
<dbReference type="PANTHER" id="PTHR48408">
    <property type="match status" value="1"/>
</dbReference>
<dbReference type="PANTHER" id="PTHR48408:SF1">
    <property type="entry name" value="XYLOSE ISOMERASE"/>
    <property type="match status" value="1"/>
</dbReference>
<dbReference type="PRINTS" id="PR00688">
    <property type="entry name" value="XYLOSISMRASE"/>
</dbReference>
<dbReference type="SUPFAM" id="SSF51658">
    <property type="entry name" value="Xylose isomerase-like"/>
    <property type="match status" value="1"/>
</dbReference>
<dbReference type="PROSITE" id="PS51415">
    <property type="entry name" value="XYLOSE_ISOMERASE"/>
    <property type="match status" value="1"/>
</dbReference>
<gene>
    <name evidence="1" type="primary">xylA</name>
    <name type="ordered locus">APJL_1955</name>
</gene>
<accession>B0BTI9</accession>